<accession>A9B5Y6</accession>
<name>KCY_HERA2</name>
<reference key="1">
    <citation type="journal article" date="2011" name="Stand. Genomic Sci.">
        <title>Complete genome sequence of the filamentous gliding predatory bacterium Herpetosiphon aurantiacus type strain (114-95(T)).</title>
        <authorList>
            <person name="Kiss H."/>
            <person name="Nett M."/>
            <person name="Domin N."/>
            <person name="Martin K."/>
            <person name="Maresca J.A."/>
            <person name="Copeland A."/>
            <person name="Lapidus A."/>
            <person name="Lucas S."/>
            <person name="Berry K.W."/>
            <person name="Glavina Del Rio T."/>
            <person name="Dalin E."/>
            <person name="Tice H."/>
            <person name="Pitluck S."/>
            <person name="Richardson P."/>
            <person name="Bruce D."/>
            <person name="Goodwin L."/>
            <person name="Han C."/>
            <person name="Detter J.C."/>
            <person name="Schmutz J."/>
            <person name="Brettin T."/>
            <person name="Land M."/>
            <person name="Hauser L."/>
            <person name="Kyrpides N.C."/>
            <person name="Ivanova N."/>
            <person name="Goeker M."/>
            <person name="Woyke T."/>
            <person name="Klenk H.P."/>
            <person name="Bryant D.A."/>
        </authorList>
    </citation>
    <scope>NUCLEOTIDE SEQUENCE [LARGE SCALE GENOMIC DNA]</scope>
    <source>
        <strain>ATCC 23779 / DSM 785 / 114-95</strain>
    </source>
</reference>
<gene>
    <name evidence="1" type="primary">cmk</name>
    <name type="ordered locus">Haur_3142</name>
</gene>
<organism>
    <name type="scientific">Herpetosiphon aurantiacus (strain ATCC 23779 / DSM 785 / 114-95)</name>
    <dbReference type="NCBI Taxonomy" id="316274"/>
    <lineage>
        <taxon>Bacteria</taxon>
        <taxon>Bacillati</taxon>
        <taxon>Chloroflexota</taxon>
        <taxon>Chloroflexia</taxon>
        <taxon>Herpetosiphonales</taxon>
        <taxon>Herpetosiphonaceae</taxon>
        <taxon>Herpetosiphon</taxon>
    </lineage>
</organism>
<evidence type="ECO:0000255" key="1">
    <source>
        <dbReference type="HAMAP-Rule" id="MF_00238"/>
    </source>
</evidence>
<feature type="chain" id="PRO_1000125288" description="Cytidylate kinase">
    <location>
        <begin position="1"/>
        <end position="229"/>
    </location>
</feature>
<feature type="binding site" evidence="1">
    <location>
        <begin position="15"/>
        <end position="23"/>
    </location>
    <ligand>
        <name>ATP</name>
        <dbReference type="ChEBI" id="CHEBI:30616"/>
    </ligand>
</feature>
<keyword id="KW-0067">ATP-binding</keyword>
<keyword id="KW-0963">Cytoplasm</keyword>
<keyword id="KW-0418">Kinase</keyword>
<keyword id="KW-0547">Nucleotide-binding</keyword>
<keyword id="KW-0808">Transferase</keyword>
<sequence>MFFTMTTPHTIAIDGPAASGKSTLGKLLADHFGYIYFDTGVLYRALTYVALEQAVDLADAAALAKLAQTSNFEVLPPTIADGRQYTVLANGEDITWPLRAANVERNVSQVAAQSAVREALRDIQRQIGKAGHVVMAGRDIGAVILPDAQLKIYLDASVEERAQRRAQELNARGRSISYREVLDDLTRRDAKDAANTFLAADAITITTDGRSPEEVFQAILGLIGVEAQA</sequence>
<comment type="catalytic activity">
    <reaction evidence="1">
        <text>CMP + ATP = CDP + ADP</text>
        <dbReference type="Rhea" id="RHEA:11600"/>
        <dbReference type="ChEBI" id="CHEBI:30616"/>
        <dbReference type="ChEBI" id="CHEBI:58069"/>
        <dbReference type="ChEBI" id="CHEBI:60377"/>
        <dbReference type="ChEBI" id="CHEBI:456216"/>
        <dbReference type="EC" id="2.7.4.25"/>
    </reaction>
</comment>
<comment type="catalytic activity">
    <reaction evidence="1">
        <text>dCMP + ATP = dCDP + ADP</text>
        <dbReference type="Rhea" id="RHEA:25094"/>
        <dbReference type="ChEBI" id="CHEBI:30616"/>
        <dbReference type="ChEBI" id="CHEBI:57566"/>
        <dbReference type="ChEBI" id="CHEBI:58593"/>
        <dbReference type="ChEBI" id="CHEBI:456216"/>
        <dbReference type="EC" id="2.7.4.25"/>
    </reaction>
</comment>
<comment type="subcellular location">
    <subcellularLocation>
        <location evidence="1">Cytoplasm</location>
    </subcellularLocation>
</comment>
<comment type="similarity">
    <text evidence="1">Belongs to the cytidylate kinase family. Type 1 subfamily.</text>
</comment>
<dbReference type="EC" id="2.7.4.25" evidence="1"/>
<dbReference type="EMBL" id="CP000875">
    <property type="protein sequence ID" value="ABX05779.1"/>
    <property type="molecule type" value="Genomic_DNA"/>
</dbReference>
<dbReference type="SMR" id="A9B5Y6"/>
<dbReference type="FunCoup" id="A9B5Y6">
    <property type="interactions" value="255"/>
</dbReference>
<dbReference type="STRING" id="316274.Haur_3142"/>
<dbReference type="KEGG" id="hau:Haur_3142"/>
<dbReference type="eggNOG" id="COG0283">
    <property type="taxonomic scope" value="Bacteria"/>
</dbReference>
<dbReference type="HOGENOM" id="CLU_079959_0_2_0"/>
<dbReference type="InParanoid" id="A9B5Y6"/>
<dbReference type="Proteomes" id="UP000000787">
    <property type="component" value="Chromosome"/>
</dbReference>
<dbReference type="GO" id="GO:0005737">
    <property type="term" value="C:cytoplasm"/>
    <property type="evidence" value="ECO:0007669"/>
    <property type="project" value="UniProtKB-SubCell"/>
</dbReference>
<dbReference type="GO" id="GO:0005524">
    <property type="term" value="F:ATP binding"/>
    <property type="evidence" value="ECO:0007669"/>
    <property type="project" value="UniProtKB-UniRule"/>
</dbReference>
<dbReference type="GO" id="GO:0036430">
    <property type="term" value="F:CMP kinase activity"/>
    <property type="evidence" value="ECO:0007669"/>
    <property type="project" value="RHEA"/>
</dbReference>
<dbReference type="GO" id="GO:0036431">
    <property type="term" value="F:dCMP kinase activity"/>
    <property type="evidence" value="ECO:0007669"/>
    <property type="project" value="RHEA"/>
</dbReference>
<dbReference type="GO" id="GO:0006220">
    <property type="term" value="P:pyrimidine nucleotide metabolic process"/>
    <property type="evidence" value="ECO:0007669"/>
    <property type="project" value="UniProtKB-UniRule"/>
</dbReference>
<dbReference type="CDD" id="cd02020">
    <property type="entry name" value="CMPK"/>
    <property type="match status" value="1"/>
</dbReference>
<dbReference type="Gene3D" id="3.40.50.300">
    <property type="entry name" value="P-loop containing nucleotide triphosphate hydrolases"/>
    <property type="match status" value="1"/>
</dbReference>
<dbReference type="HAMAP" id="MF_00238">
    <property type="entry name" value="Cytidyl_kinase_type1"/>
    <property type="match status" value="1"/>
</dbReference>
<dbReference type="InterPro" id="IPR003136">
    <property type="entry name" value="Cytidylate_kin"/>
</dbReference>
<dbReference type="InterPro" id="IPR011994">
    <property type="entry name" value="Cytidylate_kinase_dom"/>
</dbReference>
<dbReference type="InterPro" id="IPR027417">
    <property type="entry name" value="P-loop_NTPase"/>
</dbReference>
<dbReference type="NCBIfam" id="TIGR00017">
    <property type="entry name" value="cmk"/>
    <property type="match status" value="1"/>
</dbReference>
<dbReference type="Pfam" id="PF02224">
    <property type="entry name" value="Cytidylate_kin"/>
    <property type="match status" value="1"/>
</dbReference>
<dbReference type="SUPFAM" id="SSF52540">
    <property type="entry name" value="P-loop containing nucleoside triphosphate hydrolases"/>
    <property type="match status" value="1"/>
</dbReference>
<proteinExistence type="inferred from homology"/>
<protein>
    <recommendedName>
        <fullName evidence="1">Cytidylate kinase</fullName>
        <shortName evidence="1">CK</shortName>
        <ecNumber evidence="1">2.7.4.25</ecNumber>
    </recommendedName>
    <alternativeName>
        <fullName evidence="1">Cytidine monophosphate kinase</fullName>
        <shortName evidence="1">CMP kinase</shortName>
    </alternativeName>
</protein>